<keyword id="KW-0028">Amino-acid biosynthesis</keyword>
<keyword id="KW-0456">Lyase</keyword>
<keyword id="KW-0479">Metal-binding</keyword>
<keyword id="KW-0486">Methionine biosynthesis</keyword>
<keyword id="KW-0862">Zinc</keyword>
<comment type="function">
    <text evidence="1">Catalyzes the dehydration of methylthioribulose-1-phosphate (MTRu-1-P) into 2,3-diketo-5-methylthiopentyl-1-phosphate (DK-MTP-1-P).</text>
</comment>
<comment type="catalytic activity">
    <reaction evidence="1">
        <text>5-(methylsulfanyl)-D-ribulose 1-phosphate = 5-methylsulfanyl-2,3-dioxopentyl phosphate + H2O</text>
        <dbReference type="Rhea" id="RHEA:15549"/>
        <dbReference type="ChEBI" id="CHEBI:15377"/>
        <dbReference type="ChEBI" id="CHEBI:58548"/>
        <dbReference type="ChEBI" id="CHEBI:58828"/>
        <dbReference type="EC" id="4.2.1.109"/>
    </reaction>
</comment>
<comment type="cofactor">
    <cofactor evidence="1">
        <name>Zn(2+)</name>
        <dbReference type="ChEBI" id="CHEBI:29105"/>
    </cofactor>
    <text evidence="1">Binds 1 zinc ion per subunit.</text>
</comment>
<comment type="pathway">
    <text evidence="1">Amino-acid biosynthesis; L-methionine biosynthesis via salvage pathway; L-methionine from S-methyl-5-thio-alpha-D-ribose 1-phosphate: step 2/6.</text>
</comment>
<comment type="similarity">
    <text evidence="1">Belongs to the aldolase class II family. MtnB subfamily.</text>
</comment>
<evidence type="ECO:0000255" key="1">
    <source>
        <dbReference type="HAMAP-Rule" id="MF_01677"/>
    </source>
</evidence>
<organism>
    <name type="scientific">Yersinia pseudotuberculosis serotype I (strain IP32953)</name>
    <dbReference type="NCBI Taxonomy" id="273123"/>
    <lineage>
        <taxon>Bacteria</taxon>
        <taxon>Pseudomonadati</taxon>
        <taxon>Pseudomonadota</taxon>
        <taxon>Gammaproteobacteria</taxon>
        <taxon>Enterobacterales</taxon>
        <taxon>Yersiniaceae</taxon>
        <taxon>Yersinia</taxon>
    </lineage>
</organism>
<name>MTNB_YERPS</name>
<sequence>MTENRQLGALLAACHWIGEKGWCPATGGNMSLRLDLAHCLITESGKDKGSLAAEDFLLVETANNHVPSGRTPSAETGLHTLLYRLYPEIQAVLHTHSVNATVLSRVERSNALVLQGYEMQKSLSGQRSHLDAVVIPIFDNDQDIPVLAQRVAAYADNRPLQYGFLVRGHGLYCWGNSVVEARRHLEGLEFLFQCELQRRLFDVNSNVDVKPNVDVNPNVEAK</sequence>
<feature type="chain" id="PRO_0000357125" description="Methylthioribulose-1-phosphate dehydratase">
    <location>
        <begin position="1"/>
        <end position="222"/>
    </location>
</feature>
<feature type="binding site" evidence="1">
    <location>
        <position position="94"/>
    </location>
    <ligand>
        <name>Zn(2+)</name>
        <dbReference type="ChEBI" id="CHEBI:29105"/>
    </ligand>
</feature>
<feature type="binding site" evidence="1">
    <location>
        <position position="96"/>
    </location>
    <ligand>
        <name>Zn(2+)</name>
        <dbReference type="ChEBI" id="CHEBI:29105"/>
    </ligand>
</feature>
<dbReference type="EC" id="4.2.1.109" evidence="1"/>
<dbReference type="EMBL" id="BX936398">
    <property type="protein sequence ID" value="CAH20114.1"/>
    <property type="molecule type" value="Genomic_DNA"/>
</dbReference>
<dbReference type="RefSeq" id="WP_011191831.1">
    <property type="nucleotide sequence ID" value="NC_006155.1"/>
</dbReference>
<dbReference type="SMR" id="Q66E19"/>
<dbReference type="GeneID" id="49787072"/>
<dbReference type="KEGG" id="ypo:BZ17_1672"/>
<dbReference type="KEGG" id="yps:YPTB0874"/>
<dbReference type="PATRIC" id="fig|273123.14.peg.1780"/>
<dbReference type="UniPathway" id="UPA00904">
    <property type="reaction ID" value="UER00875"/>
</dbReference>
<dbReference type="Proteomes" id="UP000001011">
    <property type="component" value="Chromosome"/>
</dbReference>
<dbReference type="GO" id="GO:0005737">
    <property type="term" value="C:cytoplasm"/>
    <property type="evidence" value="ECO:0007669"/>
    <property type="project" value="InterPro"/>
</dbReference>
<dbReference type="GO" id="GO:0046570">
    <property type="term" value="F:methylthioribulose 1-phosphate dehydratase activity"/>
    <property type="evidence" value="ECO:0007669"/>
    <property type="project" value="UniProtKB-UniRule"/>
</dbReference>
<dbReference type="GO" id="GO:0008270">
    <property type="term" value="F:zinc ion binding"/>
    <property type="evidence" value="ECO:0007669"/>
    <property type="project" value="UniProtKB-UniRule"/>
</dbReference>
<dbReference type="GO" id="GO:0019509">
    <property type="term" value="P:L-methionine salvage from methylthioadenosine"/>
    <property type="evidence" value="ECO:0007669"/>
    <property type="project" value="UniProtKB-UniRule"/>
</dbReference>
<dbReference type="GO" id="GO:0005996">
    <property type="term" value="P:monosaccharide metabolic process"/>
    <property type="evidence" value="ECO:0007669"/>
    <property type="project" value="UniProtKB-ARBA"/>
</dbReference>
<dbReference type="Gene3D" id="3.40.225.10">
    <property type="entry name" value="Class II aldolase/adducin N-terminal domain"/>
    <property type="match status" value="1"/>
</dbReference>
<dbReference type="HAMAP" id="MF_01677">
    <property type="entry name" value="Salvage_MtnB"/>
    <property type="match status" value="1"/>
</dbReference>
<dbReference type="InterPro" id="IPR001303">
    <property type="entry name" value="Aldolase_II/adducin_N"/>
</dbReference>
<dbReference type="InterPro" id="IPR036409">
    <property type="entry name" value="Aldolase_II/adducin_N_sf"/>
</dbReference>
<dbReference type="InterPro" id="IPR017714">
    <property type="entry name" value="MethylthioRu-1-P_deHdtase_MtnB"/>
</dbReference>
<dbReference type="NCBIfam" id="NF006672">
    <property type="entry name" value="PRK09220.1"/>
    <property type="match status" value="1"/>
</dbReference>
<dbReference type="NCBIfam" id="TIGR03328">
    <property type="entry name" value="salvage_mtnB"/>
    <property type="match status" value="1"/>
</dbReference>
<dbReference type="PANTHER" id="PTHR10640">
    <property type="entry name" value="METHYLTHIORIBULOSE-1-PHOSPHATE DEHYDRATASE"/>
    <property type="match status" value="1"/>
</dbReference>
<dbReference type="PANTHER" id="PTHR10640:SF7">
    <property type="entry name" value="METHYLTHIORIBULOSE-1-PHOSPHATE DEHYDRATASE"/>
    <property type="match status" value="1"/>
</dbReference>
<dbReference type="Pfam" id="PF00596">
    <property type="entry name" value="Aldolase_II"/>
    <property type="match status" value="1"/>
</dbReference>
<dbReference type="SMART" id="SM01007">
    <property type="entry name" value="Aldolase_II"/>
    <property type="match status" value="1"/>
</dbReference>
<dbReference type="SUPFAM" id="SSF53639">
    <property type="entry name" value="AraD/HMP-PK domain-like"/>
    <property type="match status" value="1"/>
</dbReference>
<accession>Q66E19</accession>
<protein>
    <recommendedName>
        <fullName evidence="1">Methylthioribulose-1-phosphate dehydratase</fullName>
        <shortName evidence="1">MTRu-1-P dehydratase</shortName>
        <ecNumber evidence="1">4.2.1.109</ecNumber>
    </recommendedName>
</protein>
<reference key="1">
    <citation type="journal article" date="2004" name="Proc. Natl. Acad. Sci. U.S.A.">
        <title>Insights into the evolution of Yersinia pestis through whole-genome comparison with Yersinia pseudotuberculosis.</title>
        <authorList>
            <person name="Chain P.S.G."/>
            <person name="Carniel E."/>
            <person name="Larimer F.W."/>
            <person name="Lamerdin J."/>
            <person name="Stoutland P.O."/>
            <person name="Regala W.M."/>
            <person name="Georgescu A.M."/>
            <person name="Vergez L.M."/>
            <person name="Land M.L."/>
            <person name="Motin V.L."/>
            <person name="Brubaker R.R."/>
            <person name="Fowler J."/>
            <person name="Hinnebusch J."/>
            <person name="Marceau M."/>
            <person name="Medigue C."/>
            <person name="Simonet M."/>
            <person name="Chenal-Francisque V."/>
            <person name="Souza B."/>
            <person name="Dacheux D."/>
            <person name="Elliott J.M."/>
            <person name="Derbise A."/>
            <person name="Hauser L.J."/>
            <person name="Garcia E."/>
        </authorList>
    </citation>
    <scope>NUCLEOTIDE SEQUENCE [LARGE SCALE GENOMIC DNA]</scope>
    <source>
        <strain>IP32953</strain>
    </source>
</reference>
<gene>
    <name evidence="1" type="primary">mtnB</name>
    <name type="ordered locus">YPTB0874</name>
</gene>
<proteinExistence type="inferred from homology"/>